<evidence type="ECO:0000255" key="1">
    <source>
        <dbReference type="HAMAP-Rule" id="MF_00337"/>
    </source>
</evidence>
<name>EX7S_SODGM</name>
<keyword id="KW-0963">Cytoplasm</keyword>
<keyword id="KW-0269">Exonuclease</keyword>
<keyword id="KW-0378">Hydrolase</keyword>
<keyword id="KW-0540">Nuclease</keyword>
<comment type="function">
    <text evidence="1">Bidirectionally degrades single-stranded DNA into large acid-insoluble oligonucleotides, which are then degraded further into small acid-soluble oligonucleotides.</text>
</comment>
<comment type="catalytic activity">
    <reaction evidence="1">
        <text>Exonucleolytic cleavage in either 5'- to 3'- or 3'- to 5'-direction to yield nucleoside 5'-phosphates.</text>
        <dbReference type="EC" id="3.1.11.6"/>
    </reaction>
</comment>
<comment type="subunit">
    <text evidence="1">Heterooligomer composed of large and small subunits.</text>
</comment>
<comment type="subcellular location">
    <subcellularLocation>
        <location evidence="1">Cytoplasm</location>
    </subcellularLocation>
</comment>
<comment type="similarity">
    <text evidence="1">Belongs to the XseB family.</text>
</comment>
<proteinExistence type="inferred from homology"/>
<reference key="1">
    <citation type="journal article" date="2006" name="Genome Res.">
        <title>Massive genome erosion and functional adaptations provide insights into the symbiotic lifestyle of Sodalis glossinidius in the tsetse host.</title>
        <authorList>
            <person name="Toh H."/>
            <person name="Weiss B.L."/>
            <person name="Perkin S.A.H."/>
            <person name="Yamashita A."/>
            <person name="Oshima K."/>
            <person name="Hattori M."/>
            <person name="Aksoy S."/>
        </authorList>
    </citation>
    <scope>NUCLEOTIDE SEQUENCE [LARGE SCALE GENOMIC DNA]</scope>
    <source>
        <strain>morsitans</strain>
    </source>
</reference>
<gene>
    <name evidence="1" type="primary">xseB</name>
    <name type="ordered locus">SG0658</name>
</gene>
<accession>Q2NV92</accession>
<organism>
    <name type="scientific">Sodalis glossinidius (strain morsitans)</name>
    <dbReference type="NCBI Taxonomy" id="343509"/>
    <lineage>
        <taxon>Bacteria</taxon>
        <taxon>Pseudomonadati</taxon>
        <taxon>Pseudomonadota</taxon>
        <taxon>Gammaproteobacteria</taxon>
        <taxon>Enterobacterales</taxon>
        <taxon>Bruguierivoracaceae</taxon>
        <taxon>Sodalis</taxon>
    </lineage>
</organism>
<feature type="chain" id="PRO_0000303749" description="Exodeoxyribonuclease 7 small subunit">
    <location>
        <begin position="1"/>
        <end position="82"/>
    </location>
</feature>
<protein>
    <recommendedName>
        <fullName evidence="1">Exodeoxyribonuclease 7 small subunit</fullName>
        <ecNumber evidence="1">3.1.11.6</ecNumber>
    </recommendedName>
    <alternativeName>
        <fullName evidence="1">Exodeoxyribonuclease VII small subunit</fullName>
        <shortName evidence="1">Exonuclease VII small subunit</shortName>
    </alternativeName>
</protein>
<sequence>MPKKAEKPASFETALKELEQIVTRLESGELPLEQALNEFEQGVQLARQGQKTLQQAEQRVQILLNDTPDAPLAPFAPENDAL</sequence>
<dbReference type="EC" id="3.1.11.6" evidence="1"/>
<dbReference type="EMBL" id="AP008232">
    <property type="protein sequence ID" value="BAE73933.1"/>
    <property type="molecule type" value="Genomic_DNA"/>
</dbReference>
<dbReference type="RefSeq" id="WP_011410521.1">
    <property type="nucleotide sequence ID" value="NC_007712.1"/>
</dbReference>
<dbReference type="SMR" id="Q2NV92"/>
<dbReference type="STRING" id="343509.SG0658"/>
<dbReference type="KEGG" id="sgl:SG0658"/>
<dbReference type="eggNOG" id="COG1722">
    <property type="taxonomic scope" value="Bacteria"/>
</dbReference>
<dbReference type="HOGENOM" id="CLU_145918_3_3_6"/>
<dbReference type="OrthoDB" id="5591562at2"/>
<dbReference type="BioCyc" id="SGLO343509:SGP1_RS05690-MONOMER"/>
<dbReference type="Proteomes" id="UP000001932">
    <property type="component" value="Chromosome"/>
</dbReference>
<dbReference type="GO" id="GO:0005829">
    <property type="term" value="C:cytosol"/>
    <property type="evidence" value="ECO:0007669"/>
    <property type="project" value="TreeGrafter"/>
</dbReference>
<dbReference type="GO" id="GO:0009318">
    <property type="term" value="C:exodeoxyribonuclease VII complex"/>
    <property type="evidence" value="ECO:0007669"/>
    <property type="project" value="InterPro"/>
</dbReference>
<dbReference type="GO" id="GO:0008855">
    <property type="term" value="F:exodeoxyribonuclease VII activity"/>
    <property type="evidence" value="ECO:0007669"/>
    <property type="project" value="UniProtKB-UniRule"/>
</dbReference>
<dbReference type="GO" id="GO:0006308">
    <property type="term" value="P:DNA catabolic process"/>
    <property type="evidence" value="ECO:0007669"/>
    <property type="project" value="UniProtKB-UniRule"/>
</dbReference>
<dbReference type="FunFam" id="1.10.287.1040:FF:000001">
    <property type="entry name" value="Exodeoxyribonuclease 7 small subunit"/>
    <property type="match status" value="1"/>
</dbReference>
<dbReference type="Gene3D" id="1.10.287.1040">
    <property type="entry name" value="Exonuclease VII, small subunit"/>
    <property type="match status" value="1"/>
</dbReference>
<dbReference type="HAMAP" id="MF_00337">
    <property type="entry name" value="Exonuc_7_S"/>
    <property type="match status" value="1"/>
</dbReference>
<dbReference type="InterPro" id="IPR003761">
    <property type="entry name" value="Exonuc_VII_S"/>
</dbReference>
<dbReference type="InterPro" id="IPR037004">
    <property type="entry name" value="Exonuc_VII_ssu_sf"/>
</dbReference>
<dbReference type="NCBIfam" id="NF002137">
    <property type="entry name" value="PRK00977.1-1"/>
    <property type="match status" value="1"/>
</dbReference>
<dbReference type="NCBIfam" id="NF002140">
    <property type="entry name" value="PRK00977.1-4"/>
    <property type="match status" value="1"/>
</dbReference>
<dbReference type="NCBIfam" id="TIGR01280">
    <property type="entry name" value="xseB"/>
    <property type="match status" value="1"/>
</dbReference>
<dbReference type="PANTHER" id="PTHR34137">
    <property type="entry name" value="EXODEOXYRIBONUCLEASE 7 SMALL SUBUNIT"/>
    <property type="match status" value="1"/>
</dbReference>
<dbReference type="PANTHER" id="PTHR34137:SF1">
    <property type="entry name" value="EXODEOXYRIBONUCLEASE 7 SMALL SUBUNIT"/>
    <property type="match status" value="1"/>
</dbReference>
<dbReference type="Pfam" id="PF02609">
    <property type="entry name" value="Exonuc_VII_S"/>
    <property type="match status" value="1"/>
</dbReference>
<dbReference type="PIRSF" id="PIRSF006488">
    <property type="entry name" value="Exonuc_VII_S"/>
    <property type="match status" value="1"/>
</dbReference>
<dbReference type="SUPFAM" id="SSF116842">
    <property type="entry name" value="XseB-like"/>
    <property type="match status" value="1"/>
</dbReference>